<feature type="chain" id="PRO_0000388969" description="Putative antitoxin YutD">
    <location>
        <begin position="1"/>
        <end position="91"/>
    </location>
</feature>
<feature type="disulfide bond" evidence="1">
    <location>
        <begin position="77"/>
        <end position="81"/>
    </location>
</feature>
<feature type="strand" evidence="3">
    <location>
        <begin position="1"/>
        <end position="4"/>
    </location>
</feature>
<feature type="strand" evidence="3">
    <location>
        <begin position="7"/>
        <end position="15"/>
    </location>
</feature>
<feature type="helix" evidence="3">
    <location>
        <begin position="21"/>
        <end position="27"/>
    </location>
</feature>
<feature type="helix" evidence="3">
    <location>
        <begin position="30"/>
        <end position="34"/>
    </location>
</feature>
<feature type="strand" evidence="3">
    <location>
        <begin position="36"/>
        <end position="41"/>
    </location>
</feature>
<feature type="strand" evidence="3">
    <location>
        <begin position="48"/>
        <end position="51"/>
    </location>
</feature>
<feature type="helix" evidence="3">
    <location>
        <begin position="69"/>
        <end position="75"/>
    </location>
</feature>
<feature type="strand" evidence="3">
    <location>
        <begin position="83"/>
        <end position="88"/>
    </location>
</feature>
<keyword id="KW-0002">3D-structure</keyword>
<keyword id="KW-1015">Disulfide bond</keyword>
<keyword id="KW-1185">Reference proteome</keyword>
<keyword id="KW-1277">Toxin-antitoxin system</keyword>
<accession>O32127</accession>
<comment type="function">
    <text evidence="2">Probable antitoxin component of a putative type VII toxin-antitoxin (TA) system. Probably neutralizes cognate toxin YutE.</text>
</comment>
<comment type="subunit">
    <text evidence="2">Homodimer, probably forms a complex with cognate toxin YutE.</text>
</comment>
<proteinExistence type="evidence at protein level"/>
<protein>
    <recommendedName>
        <fullName evidence="2">Putative antitoxin YutD</fullName>
    </recommendedName>
</protein>
<dbReference type="EMBL" id="AL009126">
    <property type="protein sequence ID" value="CAB15221.2"/>
    <property type="molecule type" value="Genomic_DNA"/>
</dbReference>
<dbReference type="RefSeq" id="NP_391111.2">
    <property type="nucleotide sequence ID" value="NC_000964.3"/>
</dbReference>
<dbReference type="RefSeq" id="WP_003228682.1">
    <property type="nucleotide sequence ID" value="NZ_OZ025638.1"/>
</dbReference>
<dbReference type="PDB" id="2KL5">
    <property type="method" value="NMR"/>
    <property type="chains" value="A=1-91"/>
</dbReference>
<dbReference type="PDBsum" id="2KL5"/>
<dbReference type="BMRB" id="O32127"/>
<dbReference type="SMR" id="O32127"/>
<dbReference type="FunCoup" id="O32127">
    <property type="interactions" value="26"/>
</dbReference>
<dbReference type="STRING" id="224308.BSU32310"/>
<dbReference type="PaxDb" id="224308-BSU32310"/>
<dbReference type="DNASU" id="937182"/>
<dbReference type="EnsemblBacteria" id="CAB15221">
    <property type="protein sequence ID" value="CAB15221"/>
    <property type="gene ID" value="BSU_32310"/>
</dbReference>
<dbReference type="GeneID" id="937182"/>
<dbReference type="KEGG" id="bsu:BSU32310"/>
<dbReference type="PATRIC" id="fig|224308.179.peg.3498"/>
<dbReference type="eggNOG" id="COG4470">
    <property type="taxonomic scope" value="Bacteria"/>
</dbReference>
<dbReference type="InParanoid" id="O32127"/>
<dbReference type="OrthoDB" id="1650379at2"/>
<dbReference type="PhylomeDB" id="O32127"/>
<dbReference type="BioCyc" id="BSUB:BSU32310-MONOMER"/>
<dbReference type="EvolutionaryTrace" id="O32127"/>
<dbReference type="PRO" id="PR:O32127"/>
<dbReference type="Proteomes" id="UP000001570">
    <property type="component" value="Chromosome"/>
</dbReference>
<dbReference type="Gene3D" id="3.50.4.20">
    <property type="match status" value="1"/>
</dbReference>
<dbReference type="InterPro" id="IPR009370">
    <property type="entry name" value="YutD-like"/>
</dbReference>
<dbReference type="InterPro" id="IPR038141">
    <property type="entry name" value="YutD-like_sf"/>
</dbReference>
<dbReference type="Pfam" id="PF06265">
    <property type="entry name" value="YutD-like"/>
    <property type="match status" value="1"/>
</dbReference>
<dbReference type="PIRSF" id="PIRSF012565">
    <property type="entry name" value="DUF1027"/>
    <property type="match status" value="1"/>
</dbReference>
<name>YUTD_BACSU</name>
<organism>
    <name type="scientific">Bacillus subtilis (strain 168)</name>
    <dbReference type="NCBI Taxonomy" id="224308"/>
    <lineage>
        <taxon>Bacteria</taxon>
        <taxon>Bacillati</taxon>
        <taxon>Bacillota</taxon>
        <taxon>Bacilli</taxon>
        <taxon>Bacillales</taxon>
        <taxon>Bacillaceae</taxon>
        <taxon>Bacillus</taxon>
    </lineage>
</organism>
<gene>
    <name type="primary">yutD</name>
    <name type="ordered locus">BSU32310</name>
</gene>
<evidence type="ECO:0000269" key="1">
    <source ref="2"/>
</evidence>
<evidence type="ECO:0000305" key="2"/>
<evidence type="ECO:0007829" key="3">
    <source>
        <dbReference type="PDB" id="2KL5"/>
    </source>
</evidence>
<sequence length="91" mass="10922">MILIQNAEFELVHNFKDGFNEEAFKARYSDILNKYDYIVGDWGYGQLRLKGFFDDQNQKATFETKISTLDEYIYEYCNFGCAYFVLKRIRK</sequence>
<reference key="1">
    <citation type="journal article" date="1997" name="Nature">
        <title>The complete genome sequence of the Gram-positive bacterium Bacillus subtilis.</title>
        <authorList>
            <person name="Kunst F."/>
            <person name="Ogasawara N."/>
            <person name="Moszer I."/>
            <person name="Albertini A.M."/>
            <person name="Alloni G."/>
            <person name="Azevedo V."/>
            <person name="Bertero M.G."/>
            <person name="Bessieres P."/>
            <person name="Bolotin A."/>
            <person name="Borchert S."/>
            <person name="Borriss R."/>
            <person name="Boursier L."/>
            <person name="Brans A."/>
            <person name="Braun M."/>
            <person name="Brignell S.C."/>
            <person name="Bron S."/>
            <person name="Brouillet S."/>
            <person name="Bruschi C.V."/>
            <person name="Caldwell B."/>
            <person name="Capuano V."/>
            <person name="Carter N.M."/>
            <person name="Choi S.-K."/>
            <person name="Codani J.-J."/>
            <person name="Connerton I.F."/>
            <person name="Cummings N.J."/>
            <person name="Daniel R.A."/>
            <person name="Denizot F."/>
            <person name="Devine K.M."/>
            <person name="Duesterhoeft A."/>
            <person name="Ehrlich S.D."/>
            <person name="Emmerson P.T."/>
            <person name="Entian K.-D."/>
            <person name="Errington J."/>
            <person name="Fabret C."/>
            <person name="Ferrari E."/>
            <person name="Foulger D."/>
            <person name="Fritz C."/>
            <person name="Fujita M."/>
            <person name="Fujita Y."/>
            <person name="Fuma S."/>
            <person name="Galizzi A."/>
            <person name="Galleron N."/>
            <person name="Ghim S.-Y."/>
            <person name="Glaser P."/>
            <person name="Goffeau A."/>
            <person name="Golightly E.J."/>
            <person name="Grandi G."/>
            <person name="Guiseppi G."/>
            <person name="Guy B.J."/>
            <person name="Haga K."/>
            <person name="Haiech J."/>
            <person name="Harwood C.R."/>
            <person name="Henaut A."/>
            <person name="Hilbert H."/>
            <person name="Holsappel S."/>
            <person name="Hosono S."/>
            <person name="Hullo M.-F."/>
            <person name="Itaya M."/>
            <person name="Jones L.-M."/>
            <person name="Joris B."/>
            <person name="Karamata D."/>
            <person name="Kasahara Y."/>
            <person name="Klaerr-Blanchard M."/>
            <person name="Klein C."/>
            <person name="Kobayashi Y."/>
            <person name="Koetter P."/>
            <person name="Koningstein G."/>
            <person name="Krogh S."/>
            <person name="Kumano M."/>
            <person name="Kurita K."/>
            <person name="Lapidus A."/>
            <person name="Lardinois S."/>
            <person name="Lauber J."/>
            <person name="Lazarevic V."/>
            <person name="Lee S.-M."/>
            <person name="Levine A."/>
            <person name="Liu H."/>
            <person name="Masuda S."/>
            <person name="Mauel C."/>
            <person name="Medigue C."/>
            <person name="Medina N."/>
            <person name="Mellado R.P."/>
            <person name="Mizuno M."/>
            <person name="Moestl D."/>
            <person name="Nakai S."/>
            <person name="Noback M."/>
            <person name="Noone D."/>
            <person name="O'Reilly M."/>
            <person name="Ogawa K."/>
            <person name="Ogiwara A."/>
            <person name="Oudega B."/>
            <person name="Park S.-H."/>
            <person name="Parro V."/>
            <person name="Pohl T.M."/>
            <person name="Portetelle D."/>
            <person name="Porwollik S."/>
            <person name="Prescott A.M."/>
            <person name="Presecan E."/>
            <person name="Pujic P."/>
            <person name="Purnelle B."/>
            <person name="Rapoport G."/>
            <person name="Rey M."/>
            <person name="Reynolds S."/>
            <person name="Rieger M."/>
            <person name="Rivolta C."/>
            <person name="Rocha E."/>
            <person name="Roche B."/>
            <person name="Rose M."/>
            <person name="Sadaie Y."/>
            <person name="Sato T."/>
            <person name="Scanlan E."/>
            <person name="Schleich S."/>
            <person name="Schroeter R."/>
            <person name="Scoffone F."/>
            <person name="Sekiguchi J."/>
            <person name="Sekowska A."/>
            <person name="Seror S.J."/>
            <person name="Serror P."/>
            <person name="Shin B.-S."/>
            <person name="Soldo B."/>
            <person name="Sorokin A."/>
            <person name="Tacconi E."/>
            <person name="Takagi T."/>
            <person name="Takahashi H."/>
            <person name="Takemaru K."/>
            <person name="Takeuchi M."/>
            <person name="Tamakoshi A."/>
            <person name="Tanaka T."/>
            <person name="Terpstra P."/>
            <person name="Tognoni A."/>
            <person name="Tosato V."/>
            <person name="Uchiyama S."/>
            <person name="Vandenbol M."/>
            <person name="Vannier F."/>
            <person name="Vassarotti A."/>
            <person name="Viari A."/>
            <person name="Wambutt R."/>
            <person name="Wedler E."/>
            <person name="Wedler H."/>
            <person name="Weitzenegger T."/>
            <person name="Winters P."/>
            <person name="Wipat A."/>
            <person name="Yamamoto H."/>
            <person name="Yamane K."/>
            <person name="Yasumoto K."/>
            <person name="Yata K."/>
            <person name="Yoshida K."/>
            <person name="Yoshikawa H.-F."/>
            <person name="Zumstein E."/>
            <person name="Yoshikawa H."/>
            <person name="Danchin A."/>
        </authorList>
    </citation>
    <scope>NUCLEOTIDE SEQUENCE [LARGE SCALE GENOMIC DNA]</scope>
    <source>
        <strain>168</strain>
    </source>
</reference>
<reference key="2">
    <citation type="submission" date="2009-07" db="PDB data bank">
        <title>Solution NMR structure of protein yutD from B.subtilis, Northeast structural genomics consortium target sr232.</title>
        <authorList>
            <consortium name="Northeast structural genomics consortium (NESG)"/>
        </authorList>
    </citation>
    <scope>STRUCTURE BY NMR</scope>
    <scope>DISULFIDE BOND</scope>
</reference>